<accession>A8GPE4</accession>
<protein>
    <recommendedName>
        <fullName evidence="1">Small ribosomal subunit protein uS3</fullName>
    </recommendedName>
    <alternativeName>
        <fullName evidence="2">30S ribosomal protein S3</fullName>
    </alternativeName>
</protein>
<dbReference type="EMBL" id="CP000847">
    <property type="protein sequence ID" value="ABV75269.1"/>
    <property type="molecule type" value="Genomic_DNA"/>
</dbReference>
<dbReference type="RefSeq" id="WP_012149899.1">
    <property type="nucleotide sequence ID" value="NC_009881.1"/>
</dbReference>
<dbReference type="SMR" id="A8GPE4"/>
<dbReference type="STRING" id="293614.A1C_05075"/>
<dbReference type="KEGG" id="rak:A1C_05075"/>
<dbReference type="eggNOG" id="COG0092">
    <property type="taxonomic scope" value="Bacteria"/>
</dbReference>
<dbReference type="HOGENOM" id="CLU_058591_0_2_5"/>
<dbReference type="Proteomes" id="UP000006830">
    <property type="component" value="Chromosome"/>
</dbReference>
<dbReference type="GO" id="GO:0022627">
    <property type="term" value="C:cytosolic small ribosomal subunit"/>
    <property type="evidence" value="ECO:0007669"/>
    <property type="project" value="TreeGrafter"/>
</dbReference>
<dbReference type="GO" id="GO:0003729">
    <property type="term" value="F:mRNA binding"/>
    <property type="evidence" value="ECO:0007669"/>
    <property type="project" value="UniProtKB-UniRule"/>
</dbReference>
<dbReference type="GO" id="GO:0019843">
    <property type="term" value="F:rRNA binding"/>
    <property type="evidence" value="ECO:0007669"/>
    <property type="project" value="UniProtKB-UniRule"/>
</dbReference>
<dbReference type="GO" id="GO:0003735">
    <property type="term" value="F:structural constituent of ribosome"/>
    <property type="evidence" value="ECO:0007669"/>
    <property type="project" value="InterPro"/>
</dbReference>
<dbReference type="GO" id="GO:0006412">
    <property type="term" value="P:translation"/>
    <property type="evidence" value="ECO:0007669"/>
    <property type="project" value="UniProtKB-UniRule"/>
</dbReference>
<dbReference type="CDD" id="cd02412">
    <property type="entry name" value="KH-II_30S_S3"/>
    <property type="match status" value="1"/>
</dbReference>
<dbReference type="FunFam" id="3.30.300.20:FF:000001">
    <property type="entry name" value="30S ribosomal protein S3"/>
    <property type="match status" value="1"/>
</dbReference>
<dbReference type="Gene3D" id="3.30.300.20">
    <property type="match status" value="1"/>
</dbReference>
<dbReference type="Gene3D" id="3.30.1140.32">
    <property type="entry name" value="Ribosomal protein S3, C-terminal domain"/>
    <property type="match status" value="1"/>
</dbReference>
<dbReference type="HAMAP" id="MF_01309_B">
    <property type="entry name" value="Ribosomal_uS3_B"/>
    <property type="match status" value="1"/>
</dbReference>
<dbReference type="InterPro" id="IPR004087">
    <property type="entry name" value="KH_dom"/>
</dbReference>
<dbReference type="InterPro" id="IPR015946">
    <property type="entry name" value="KH_dom-like_a/b"/>
</dbReference>
<dbReference type="InterPro" id="IPR004044">
    <property type="entry name" value="KH_dom_type_2"/>
</dbReference>
<dbReference type="InterPro" id="IPR009019">
    <property type="entry name" value="KH_sf_prok-type"/>
</dbReference>
<dbReference type="InterPro" id="IPR036419">
    <property type="entry name" value="Ribosomal_S3_C_sf"/>
</dbReference>
<dbReference type="InterPro" id="IPR005704">
    <property type="entry name" value="Ribosomal_uS3_bac-typ"/>
</dbReference>
<dbReference type="InterPro" id="IPR001351">
    <property type="entry name" value="Ribosomal_uS3_C"/>
</dbReference>
<dbReference type="InterPro" id="IPR018280">
    <property type="entry name" value="Ribosomal_uS3_CS"/>
</dbReference>
<dbReference type="NCBIfam" id="TIGR01009">
    <property type="entry name" value="rpsC_bact"/>
    <property type="match status" value="1"/>
</dbReference>
<dbReference type="PANTHER" id="PTHR11760">
    <property type="entry name" value="30S/40S RIBOSOMAL PROTEIN S3"/>
    <property type="match status" value="1"/>
</dbReference>
<dbReference type="PANTHER" id="PTHR11760:SF19">
    <property type="entry name" value="SMALL RIBOSOMAL SUBUNIT PROTEIN US3C"/>
    <property type="match status" value="1"/>
</dbReference>
<dbReference type="Pfam" id="PF07650">
    <property type="entry name" value="KH_2"/>
    <property type="match status" value="1"/>
</dbReference>
<dbReference type="Pfam" id="PF00189">
    <property type="entry name" value="Ribosomal_S3_C"/>
    <property type="match status" value="1"/>
</dbReference>
<dbReference type="SMART" id="SM00322">
    <property type="entry name" value="KH"/>
    <property type="match status" value="1"/>
</dbReference>
<dbReference type="SUPFAM" id="SSF54814">
    <property type="entry name" value="Prokaryotic type KH domain (KH-domain type II)"/>
    <property type="match status" value="1"/>
</dbReference>
<dbReference type="SUPFAM" id="SSF54821">
    <property type="entry name" value="Ribosomal protein S3 C-terminal domain"/>
    <property type="match status" value="1"/>
</dbReference>
<dbReference type="PROSITE" id="PS50823">
    <property type="entry name" value="KH_TYPE_2"/>
    <property type="match status" value="1"/>
</dbReference>
<dbReference type="PROSITE" id="PS00548">
    <property type="entry name" value="RIBOSOMAL_S3"/>
    <property type="match status" value="1"/>
</dbReference>
<sequence>MGQKVCAHGFRVGPTLIKGWDSVLYAEKHYKTLFIQDLKIRDLINKGFNQAQVSRVLIERPSNKSIIISINAKKPNIIIGRNGSEIDKLKKAIEKMTFLKEVYINIHEVRKFNIDAAIVAQTIALQLEKRVSFRKAMKTAIQASLKQGGQGIRVSCSGRLGGAEIARTEWYIEGRMPLHTLRADIDYSTAEAITTYGVIGVKVWIYKGEYTENKRYN</sequence>
<feature type="chain" id="PRO_1000086147" description="Small ribosomal subunit protein uS3">
    <location>
        <begin position="1"/>
        <end position="217"/>
    </location>
</feature>
<feature type="domain" description="KH type-2" evidence="1">
    <location>
        <begin position="40"/>
        <end position="110"/>
    </location>
</feature>
<name>RS3_RICAH</name>
<keyword id="KW-0687">Ribonucleoprotein</keyword>
<keyword id="KW-0689">Ribosomal protein</keyword>
<keyword id="KW-0694">RNA-binding</keyword>
<keyword id="KW-0699">rRNA-binding</keyword>
<comment type="function">
    <text evidence="1">Binds the lower part of the 30S subunit head. Binds mRNA in the 70S ribosome, positioning it for translation.</text>
</comment>
<comment type="subunit">
    <text evidence="1">Part of the 30S ribosomal subunit. Forms a tight complex with proteins S10 and S14.</text>
</comment>
<comment type="similarity">
    <text evidence="1">Belongs to the universal ribosomal protein uS3 family.</text>
</comment>
<gene>
    <name evidence="1" type="primary">rpsC</name>
    <name type="ordered locus">A1C_05075</name>
</gene>
<evidence type="ECO:0000255" key="1">
    <source>
        <dbReference type="HAMAP-Rule" id="MF_01309"/>
    </source>
</evidence>
<evidence type="ECO:0000305" key="2"/>
<reference key="1">
    <citation type="submission" date="2007-09" db="EMBL/GenBank/DDBJ databases">
        <title>Complete genome sequence of Rickettsia akari.</title>
        <authorList>
            <person name="Madan A."/>
            <person name="Fahey J."/>
            <person name="Helton E."/>
            <person name="Ketteman M."/>
            <person name="Madan A."/>
            <person name="Rodrigues S."/>
            <person name="Sanchez A."/>
            <person name="Whiting M."/>
            <person name="Dasch G."/>
            <person name="Eremeeva M."/>
        </authorList>
    </citation>
    <scope>NUCLEOTIDE SEQUENCE [LARGE SCALE GENOMIC DNA]</scope>
    <source>
        <strain>Hartford</strain>
    </source>
</reference>
<organism>
    <name type="scientific">Rickettsia akari (strain Hartford)</name>
    <dbReference type="NCBI Taxonomy" id="293614"/>
    <lineage>
        <taxon>Bacteria</taxon>
        <taxon>Pseudomonadati</taxon>
        <taxon>Pseudomonadota</taxon>
        <taxon>Alphaproteobacteria</taxon>
        <taxon>Rickettsiales</taxon>
        <taxon>Rickettsiaceae</taxon>
        <taxon>Rickettsieae</taxon>
        <taxon>Rickettsia</taxon>
        <taxon>spotted fever group</taxon>
    </lineage>
</organism>
<proteinExistence type="inferred from homology"/>